<organism evidence="6">
    <name type="scientific">Caenorhabditis elegans</name>
    <dbReference type="NCBI Taxonomy" id="6239"/>
    <lineage>
        <taxon>Eukaryota</taxon>
        <taxon>Metazoa</taxon>
        <taxon>Ecdysozoa</taxon>
        <taxon>Nematoda</taxon>
        <taxon>Chromadorea</taxon>
        <taxon>Rhabditida</taxon>
        <taxon>Rhabditina</taxon>
        <taxon>Rhabditomorpha</taxon>
        <taxon>Rhabditoidea</taxon>
        <taxon>Rhabditidae</taxon>
        <taxon>Peloderinae</taxon>
        <taxon>Caenorhabditis</taxon>
    </lineage>
</organism>
<name>RAB39_CAEEL</name>
<sequence>METNFIGDDYGPLFHYQYRLIVIGDSTVGKSSLLRYFTEGKMAEISDPTVGVDFYARMIELRPGYRVKLQLWDTAGQEKFRSITKSYYRNSVGVLAIYDTTNRESFEHVENWVKEAALNLGGPSPSKCVFQLVGTKSDMDSQRQVNYEEGEYFAKYHKMKFIETSSRTGDNVNEAFHMIAQEIQNRVDDGELRPVDGWEGLKTGIMRSQSVCLSERSFPQNSSAGACGC</sequence>
<evidence type="ECO:0000250" key="1">
    <source>
        <dbReference type="UniProtKB" id="P20336"/>
    </source>
</evidence>
<evidence type="ECO:0000250" key="2">
    <source>
        <dbReference type="UniProtKB" id="P62820"/>
    </source>
</evidence>
<evidence type="ECO:0000250" key="3">
    <source>
        <dbReference type="UniProtKB" id="Q96DA2"/>
    </source>
</evidence>
<evidence type="ECO:0000269" key="4">
    <source>
    </source>
</evidence>
<evidence type="ECO:0000305" key="5"/>
<evidence type="ECO:0000312" key="6">
    <source>
        <dbReference type="Proteomes" id="UP000001940"/>
    </source>
</evidence>
<evidence type="ECO:0000312" key="7">
    <source>
        <dbReference type="WormBase" id="D2013.1"/>
    </source>
</evidence>
<gene>
    <name evidence="7" type="primary">rab-39</name>
    <name evidence="7" type="ORF">D2013.1</name>
</gene>
<reference evidence="6" key="1">
    <citation type="journal article" date="1998" name="Science">
        <title>Genome sequence of the nematode C. elegans: a platform for investigating biology.</title>
        <authorList>
            <consortium name="The C. elegans sequencing consortium"/>
        </authorList>
    </citation>
    <scope>NUCLEOTIDE SEQUENCE [LARGE SCALE GENOMIC DNA]</scope>
    <source>
        <strain evidence="6">Bristol N2</strain>
    </source>
</reference>
<reference evidence="5" key="2">
    <citation type="journal article" date="2013" name="Genes Cells">
        <title>C. elegans Rassf homolog, rasf-1, is functionally associated with rab-39 Rab GTPase in oxidative stress response.</title>
        <authorList>
            <person name="Takenaka M."/>
            <person name="Inoue H."/>
            <person name="Takeshima A."/>
            <person name="Kakura T."/>
            <person name="Hori T."/>
        </authorList>
    </citation>
    <scope>FUNCTION</scope>
    <scope>INTERACTION WITH RSF-1</scope>
    <scope>DISRUPTION PHENOTYPE</scope>
    <scope>MUTAGENESIS OF SER-31 AND GLN-77</scope>
</reference>
<keyword id="KW-0072">Autophagy</keyword>
<keyword id="KW-1003">Cell membrane</keyword>
<keyword id="KW-0968">Cytoplasmic vesicle</keyword>
<keyword id="KW-0333">Golgi apparatus</keyword>
<keyword id="KW-0342">GTP-binding</keyword>
<keyword id="KW-0449">Lipoprotein</keyword>
<keyword id="KW-0472">Membrane</keyword>
<keyword id="KW-0488">Methylation</keyword>
<keyword id="KW-0547">Nucleotide-binding</keyword>
<keyword id="KW-0636">Prenylation</keyword>
<keyword id="KW-1185">Reference proteome</keyword>
<comment type="function">
    <text evidence="3 4">Small GTPases Rab involved in autophagy (By similarity). The small GTPases Rab are key regulators of intracellular membrane trafficking, from the formation of transport vesicles to their fusion with membranes (By similarity). Rabs cycle between an inactive GDP-bound form and an active GTP-bound form that is able to recruit to membranes different sets of downstream effectors directly responsible for vesicle formation, movement, tethering and fusion (By similarity). Involved in positively regulating the oxidative stress response, perhaps in concert with the Ras association domain-containing protein rsf-1 (PubMed:23294242).</text>
</comment>
<comment type="subunit">
    <text evidence="4">Interacts (in GTP-bound form) with Ras association domain-containing protein rsf-1.</text>
</comment>
<comment type="subcellular location">
    <subcellularLocation>
        <location evidence="3">Cell membrane</location>
        <topology evidence="3">Lipid-anchor</topology>
        <orientation evidence="3">Cytoplasmic side</orientation>
    </subcellularLocation>
    <subcellularLocation>
        <location evidence="3">Cytoplasmic vesicle membrane</location>
        <topology evidence="3">Lipid-anchor</topology>
        <orientation evidence="3">Cytoplasmic side</orientation>
    </subcellularLocation>
    <subcellularLocation>
        <location evidence="3">Golgi apparatus</location>
    </subcellularLocation>
</comment>
<comment type="disruption phenotype">
    <text evidence="4">RNAi-mediated knockdown results in reduced survival in response to oxidative stress induced by sodium arsenite.</text>
</comment>
<comment type="similarity">
    <text evidence="5">Belongs to the small GTPase superfamily. Rab family.</text>
</comment>
<protein>
    <recommendedName>
        <fullName evidence="3">Ras-related protein rab-39</fullName>
    </recommendedName>
    <alternativeName>
        <fullName evidence="7">Rab family rab-39</fullName>
    </alternativeName>
</protein>
<dbReference type="EMBL" id="BX284602">
    <property type="protein sequence ID" value="CAA87774.2"/>
    <property type="molecule type" value="Genomic_DNA"/>
</dbReference>
<dbReference type="PIR" id="T20339">
    <property type="entry name" value="T20339"/>
</dbReference>
<dbReference type="RefSeq" id="NP_495984.2">
    <property type="nucleotide sequence ID" value="NM_063583.2"/>
</dbReference>
<dbReference type="SMR" id="Q18969"/>
<dbReference type="FunCoup" id="Q18969">
    <property type="interactions" value="1526"/>
</dbReference>
<dbReference type="STRING" id="6239.D2013.1.1"/>
<dbReference type="PaxDb" id="6239-D2013.1"/>
<dbReference type="PeptideAtlas" id="Q18969"/>
<dbReference type="EnsemblMetazoa" id="D2013.1.1">
    <property type="protein sequence ID" value="D2013.1.1"/>
    <property type="gene ID" value="WBGene00004286"/>
</dbReference>
<dbReference type="GeneID" id="183941"/>
<dbReference type="KEGG" id="cel:CELE_D2013.1"/>
<dbReference type="UCSC" id="D2013.1">
    <property type="organism name" value="c. elegans"/>
</dbReference>
<dbReference type="AGR" id="WB:WBGene00004286"/>
<dbReference type="CTD" id="183941"/>
<dbReference type="WormBase" id="D2013.1">
    <property type="protein sequence ID" value="CE30340"/>
    <property type="gene ID" value="WBGene00004286"/>
    <property type="gene designation" value="rab-39"/>
</dbReference>
<dbReference type="eggNOG" id="KOG0091">
    <property type="taxonomic scope" value="Eukaryota"/>
</dbReference>
<dbReference type="GeneTree" id="ENSGT00940000168280"/>
<dbReference type="HOGENOM" id="CLU_041217_23_1_1"/>
<dbReference type="InParanoid" id="Q18969"/>
<dbReference type="OMA" id="LGEQCPC"/>
<dbReference type="OrthoDB" id="9989112at2759"/>
<dbReference type="PhylomeDB" id="Q18969"/>
<dbReference type="Reactome" id="R-CEL-6811438">
    <property type="pathway name" value="Intra-Golgi traffic"/>
</dbReference>
<dbReference type="Reactome" id="R-CEL-8873719">
    <property type="pathway name" value="RAB geranylgeranylation"/>
</dbReference>
<dbReference type="Reactome" id="R-CEL-8876198">
    <property type="pathway name" value="RAB GEFs exchange GTP for GDP on RABs"/>
</dbReference>
<dbReference type="PRO" id="PR:Q18969"/>
<dbReference type="Proteomes" id="UP000001940">
    <property type="component" value="Chromosome II"/>
</dbReference>
<dbReference type="Bgee" id="WBGene00004286">
    <property type="expression patterns" value="Expressed in larva and 4 other cell types or tissues"/>
</dbReference>
<dbReference type="GO" id="GO:0030659">
    <property type="term" value="C:cytoplasmic vesicle membrane"/>
    <property type="evidence" value="ECO:0007669"/>
    <property type="project" value="UniProtKB-SubCell"/>
</dbReference>
<dbReference type="GO" id="GO:0005794">
    <property type="term" value="C:Golgi apparatus"/>
    <property type="evidence" value="ECO:0007669"/>
    <property type="project" value="UniProtKB-SubCell"/>
</dbReference>
<dbReference type="GO" id="GO:0005886">
    <property type="term" value="C:plasma membrane"/>
    <property type="evidence" value="ECO:0007669"/>
    <property type="project" value="UniProtKB-SubCell"/>
</dbReference>
<dbReference type="GO" id="GO:0005525">
    <property type="term" value="F:GTP binding"/>
    <property type="evidence" value="ECO:0000314"/>
    <property type="project" value="UniProtKB"/>
</dbReference>
<dbReference type="GO" id="GO:0003924">
    <property type="term" value="F:GTPase activity"/>
    <property type="evidence" value="ECO:0000318"/>
    <property type="project" value="GO_Central"/>
</dbReference>
<dbReference type="GO" id="GO:0006914">
    <property type="term" value="P:autophagy"/>
    <property type="evidence" value="ECO:0007669"/>
    <property type="project" value="UniProtKB-KW"/>
</dbReference>
<dbReference type="GO" id="GO:1902884">
    <property type="term" value="P:positive regulation of response to oxidative stress"/>
    <property type="evidence" value="ECO:0000315"/>
    <property type="project" value="UniProtKB"/>
</dbReference>
<dbReference type="GO" id="GO:0032482">
    <property type="term" value="P:Rab protein signal transduction"/>
    <property type="evidence" value="ECO:0007669"/>
    <property type="project" value="InterPro"/>
</dbReference>
<dbReference type="GO" id="GO:0016192">
    <property type="term" value="P:vesicle-mediated transport"/>
    <property type="evidence" value="ECO:0000318"/>
    <property type="project" value="GO_Central"/>
</dbReference>
<dbReference type="CDD" id="cd04111">
    <property type="entry name" value="Rab39"/>
    <property type="match status" value="1"/>
</dbReference>
<dbReference type="FunFam" id="3.40.50.300:FF:000358">
    <property type="entry name" value="RAB39B, member RAS oncogene family"/>
    <property type="match status" value="1"/>
</dbReference>
<dbReference type="Gene3D" id="3.40.50.300">
    <property type="entry name" value="P-loop containing nucleotide triphosphate hydrolases"/>
    <property type="match status" value="1"/>
</dbReference>
<dbReference type="InterPro" id="IPR027417">
    <property type="entry name" value="P-loop_NTPase"/>
</dbReference>
<dbReference type="InterPro" id="IPR041818">
    <property type="entry name" value="Rab39"/>
</dbReference>
<dbReference type="InterPro" id="IPR050209">
    <property type="entry name" value="Rab_GTPases_membrane_traffic"/>
</dbReference>
<dbReference type="InterPro" id="IPR005225">
    <property type="entry name" value="Small_GTP-bd"/>
</dbReference>
<dbReference type="InterPro" id="IPR001806">
    <property type="entry name" value="Small_GTPase"/>
</dbReference>
<dbReference type="NCBIfam" id="TIGR00231">
    <property type="entry name" value="small_GTP"/>
    <property type="match status" value="1"/>
</dbReference>
<dbReference type="PANTHER" id="PTHR47979">
    <property type="entry name" value="DRAB11-RELATED"/>
    <property type="match status" value="1"/>
</dbReference>
<dbReference type="Pfam" id="PF00071">
    <property type="entry name" value="Ras"/>
    <property type="match status" value="1"/>
</dbReference>
<dbReference type="PRINTS" id="PR00449">
    <property type="entry name" value="RASTRNSFRMNG"/>
</dbReference>
<dbReference type="SMART" id="SM00175">
    <property type="entry name" value="RAB"/>
    <property type="match status" value="1"/>
</dbReference>
<dbReference type="SMART" id="SM00173">
    <property type="entry name" value="RAS"/>
    <property type="match status" value="1"/>
</dbReference>
<dbReference type="SMART" id="SM00174">
    <property type="entry name" value="RHO"/>
    <property type="match status" value="1"/>
</dbReference>
<dbReference type="SUPFAM" id="SSF52540">
    <property type="entry name" value="P-loop containing nucleoside triphosphate hydrolases"/>
    <property type="match status" value="1"/>
</dbReference>
<dbReference type="PROSITE" id="PS51419">
    <property type="entry name" value="RAB"/>
    <property type="match status" value="1"/>
</dbReference>
<accession>Q18969</accession>
<feature type="chain" id="PRO_0000457932" description="Ras-related protein rab-39">
    <location>
        <begin position="1"/>
        <end position="229"/>
    </location>
</feature>
<feature type="binding site" evidence="2">
    <location>
        <begin position="73"/>
        <end position="77"/>
    </location>
    <ligand>
        <name>GTP</name>
        <dbReference type="ChEBI" id="CHEBI:37565"/>
    </ligand>
</feature>
<feature type="modified residue" description="Cysteine methyl ester" evidence="1">
    <location>
        <position position="229"/>
    </location>
</feature>
<feature type="lipid moiety-binding region" description="S-geranylgeranyl cysteine" evidence="1">
    <location>
        <position position="227"/>
    </location>
</feature>
<feature type="lipid moiety-binding region" description="S-geranylgeranyl cysteine" evidence="1">
    <location>
        <position position="229"/>
    </location>
</feature>
<feature type="mutagenesis site" description="Mutation mimics dominant negative 'GDP-locked' form of protein; abolishes interaction with rsf-1 in vitro." evidence="4">
    <original>S</original>
    <variation>N</variation>
    <location>
        <position position="31"/>
    </location>
</feature>
<feature type="mutagenesis site" description="Mutation mimics constitutively active 'GTP-locked' form of protein; does not affect interaction with rsf-1 in vitro." evidence="4">
    <original>Q</original>
    <variation>L</variation>
    <location>
        <position position="77"/>
    </location>
</feature>
<proteinExistence type="evidence at protein level"/>